<protein>
    <recommendedName>
        <fullName evidence="1">Inorganic pyrophosphatase</fullName>
        <ecNumber evidence="1">3.6.1.1</ecNumber>
    </recommendedName>
    <alternativeName>
        <fullName evidence="1">Pyrophosphate phospho-hydrolase</fullName>
        <shortName evidence="1">PPase</shortName>
    </alternativeName>
</protein>
<accession>Q3KKS0</accession>
<reference key="1">
    <citation type="journal article" date="2005" name="Infect. Immun.">
        <title>Comparative genomic analysis of Chlamydia trachomatis oculotropic and genitotropic strains.</title>
        <authorList>
            <person name="Carlson J.H."/>
            <person name="Porcella S.F."/>
            <person name="McClarty G."/>
            <person name="Caldwell H.D."/>
        </authorList>
    </citation>
    <scope>NUCLEOTIDE SEQUENCE [LARGE SCALE GENOMIC DNA]</scope>
    <source>
        <strain>ATCC VR-571B / DSM 19440 / HAR-13</strain>
    </source>
</reference>
<feature type="chain" id="PRO_1000021251" description="Inorganic pyrophosphatase">
    <location>
        <begin position="1"/>
        <end position="209"/>
    </location>
</feature>
<feature type="binding site" evidence="1">
    <location>
        <position position="38"/>
    </location>
    <ligand>
        <name>substrate</name>
    </ligand>
</feature>
<feature type="binding site" evidence="1">
    <location>
        <position position="52"/>
    </location>
    <ligand>
        <name>substrate</name>
    </ligand>
</feature>
<feature type="binding site" evidence="1">
    <location>
        <position position="64"/>
    </location>
    <ligand>
        <name>substrate</name>
    </ligand>
</feature>
<feature type="binding site" evidence="1">
    <location>
        <position position="92"/>
    </location>
    <ligand>
        <name>Mg(2+)</name>
        <dbReference type="ChEBI" id="CHEBI:18420"/>
        <label>1</label>
    </ligand>
</feature>
<feature type="binding site" evidence="1">
    <location>
        <position position="97"/>
    </location>
    <ligand>
        <name>Mg(2+)</name>
        <dbReference type="ChEBI" id="CHEBI:18420"/>
        <label>1</label>
    </ligand>
</feature>
<feature type="binding site" evidence="1">
    <location>
        <position position="97"/>
    </location>
    <ligand>
        <name>Mg(2+)</name>
        <dbReference type="ChEBI" id="CHEBI:18420"/>
        <label>2</label>
    </ligand>
</feature>
<feature type="binding site" evidence="1">
    <location>
        <position position="130"/>
    </location>
    <ligand>
        <name>Mg(2+)</name>
        <dbReference type="ChEBI" id="CHEBI:18420"/>
        <label>1</label>
    </ligand>
</feature>
<feature type="binding site" evidence="1">
    <location>
        <position position="167"/>
    </location>
    <ligand>
        <name>substrate</name>
    </ligand>
</feature>
<dbReference type="EC" id="3.6.1.1" evidence="1"/>
<dbReference type="EMBL" id="CP000051">
    <property type="protein sequence ID" value="AAX51052.1"/>
    <property type="molecule type" value="Genomic_DNA"/>
</dbReference>
<dbReference type="RefSeq" id="WP_009872152.1">
    <property type="nucleotide sequence ID" value="NC_007429.1"/>
</dbReference>
<dbReference type="SMR" id="Q3KKS0"/>
<dbReference type="KEGG" id="cta:CTA_0842"/>
<dbReference type="HOGENOM" id="CLU_073198_2_1_0"/>
<dbReference type="Proteomes" id="UP000002532">
    <property type="component" value="Chromosome"/>
</dbReference>
<dbReference type="GO" id="GO:0005737">
    <property type="term" value="C:cytoplasm"/>
    <property type="evidence" value="ECO:0007669"/>
    <property type="project" value="UniProtKB-SubCell"/>
</dbReference>
<dbReference type="GO" id="GO:0004427">
    <property type="term" value="F:inorganic diphosphate phosphatase activity"/>
    <property type="evidence" value="ECO:0007669"/>
    <property type="project" value="UniProtKB-UniRule"/>
</dbReference>
<dbReference type="GO" id="GO:0000287">
    <property type="term" value="F:magnesium ion binding"/>
    <property type="evidence" value="ECO:0007669"/>
    <property type="project" value="UniProtKB-UniRule"/>
</dbReference>
<dbReference type="GO" id="GO:0006796">
    <property type="term" value="P:phosphate-containing compound metabolic process"/>
    <property type="evidence" value="ECO:0007669"/>
    <property type="project" value="InterPro"/>
</dbReference>
<dbReference type="CDD" id="cd00412">
    <property type="entry name" value="pyrophosphatase"/>
    <property type="match status" value="1"/>
</dbReference>
<dbReference type="FunFam" id="3.90.80.10:FF:000016">
    <property type="entry name" value="Inorganic pyrophosphatase"/>
    <property type="match status" value="1"/>
</dbReference>
<dbReference type="Gene3D" id="3.90.80.10">
    <property type="entry name" value="Inorganic pyrophosphatase"/>
    <property type="match status" value="1"/>
</dbReference>
<dbReference type="HAMAP" id="MF_00209">
    <property type="entry name" value="Inorganic_PPase"/>
    <property type="match status" value="1"/>
</dbReference>
<dbReference type="InterPro" id="IPR008162">
    <property type="entry name" value="Pyrophosphatase"/>
</dbReference>
<dbReference type="InterPro" id="IPR036649">
    <property type="entry name" value="Pyrophosphatase_sf"/>
</dbReference>
<dbReference type="NCBIfam" id="NF001886">
    <property type="entry name" value="PRK00642.1"/>
    <property type="match status" value="1"/>
</dbReference>
<dbReference type="PANTHER" id="PTHR10286">
    <property type="entry name" value="INORGANIC PYROPHOSPHATASE"/>
    <property type="match status" value="1"/>
</dbReference>
<dbReference type="Pfam" id="PF00719">
    <property type="entry name" value="Pyrophosphatase"/>
    <property type="match status" value="1"/>
</dbReference>
<dbReference type="SUPFAM" id="SSF50324">
    <property type="entry name" value="Inorganic pyrophosphatase"/>
    <property type="match status" value="1"/>
</dbReference>
<dbReference type="PROSITE" id="PS00387">
    <property type="entry name" value="PPASE"/>
    <property type="match status" value="1"/>
</dbReference>
<organism>
    <name type="scientific">Chlamydia trachomatis serovar A (strain ATCC VR-571B / DSM 19440 / HAR-13)</name>
    <dbReference type="NCBI Taxonomy" id="315277"/>
    <lineage>
        <taxon>Bacteria</taxon>
        <taxon>Pseudomonadati</taxon>
        <taxon>Chlamydiota</taxon>
        <taxon>Chlamydiia</taxon>
        <taxon>Chlamydiales</taxon>
        <taxon>Chlamydiaceae</taxon>
        <taxon>Chlamydia/Chlamydophila group</taxon>
        <taxon>Chlamydia</taxon>
    </lineage>
</organism>
<gene>
    <name evidence="1" type="primary">ppa</name>
    <name type="ordered locus">CTA_0842</name>
</gene>
<evidence type="ECO:0000255" key="1">
    <source>
        <dbReference type="HAMAP-Rule" id="MF_00209"/>
    </source>
</evidence>
<keyword id="KW-0963">Cytoplasm</keyword>
<keyword id="KW-0378">Hydrolase</keyword>
<keyword id="KW-0460">Magnesium</keyword>
<keyword id="KW-0479">Metal-binding</keyword>
<sequence length="209" mass="23391">MSKTPLSIAHPWHGPVLTRDDYESLCCYIEITPADSVKFELDKETGILKVDRPQKFSNFCPCLYGLLPKTYCGDLSGEYSGQQSNRENIKGDGDPLDICVLTEKNITQGNILLQARPIGGIRILDSEEADDKIIAVLEDDLVYGNIEDISECPGTVLDMIQHYFLTYKATPESLIQAKPAKIEIVGLYGKKEAQKVIRLAHEDYCNLFM</sequence>
<proteinExistence type="inferred from homology"/>
<name>IPYR_CHLTA</name>
<comment type="function">
    <text evidence="1">Catalyzes the hydrolysis of inorganic pyrophosphate (PPi) forming two phosphate ions.</text>
</comment>
<comment type="catalytic activity">
    <reaction evidence="1">
        <text>diphosphate + H2O = 2 phosphate + H(+)</text>
        <dbReference type="Rhea" id="RHEA:24576"/>
        <dbReference type="ChEBI" id="CHEBI:15377"/>
        <dbReference type="ChEBI" id="CHEBI:15378"/>
        <dbReference type="ChEBI" id="CHEBI:33019"/>
        <dbReference type="ChEBI" id="CHEBI:43474"/>
        <dbReference type="EC" id="3.6.1.1"/>
    </reaction>
</comment>
<comment type="cofactor">
    <cofactor evidence="1">
        <name>Mg(2+)</name>
        <dbReference type="ChEBI" id="CHEBI:18420"/>
    </cofactor>
</comment>
<comment type="subunit">
    <text evidence="1">Homohexamer.</text>
</comment>
<comment type="subcellular location">
    <subcellularLocation>
        <location evidence="1">Cytoplasm</location>
    </subcellularLocation>
</comment>
<comment type="similarity">
    <text evidence="1">Belongs to the PPase family.</text>
</comment>